<gene>
    <name type="primary">TPR</name>
</gene>
<comment type="function">
    <text>Trypanothione is the parasite analog of glutathione; this enzyme is the equivalent of glutathione reductase.</text>
</comment>
<comment type="catalytic activity">
    <reaction>
        <text>trypanothione + NADP(+) = trypanothione disulfide + NADPH + H(+)</text>
        <dbReference type="Rhea" id="RHEA:16757"/>
        <dbReference type="ChEBI" id="CHEBI:15378"/>
        <dbReference type="ChEBI" id="CHEBI:57783"/>
        <dbReference type="ChEBI" id="CHEBI:58290"/>
        <dbReference type="ChEBI" id="CHEBI:58349"/>
        <dbReference type="ChEBI" id="CHEBI:58661"/>
        <dbReference type="EC" id="1.8.1.12"/>
    </reaction>
</comment>
<comment type="cofactor">
    <cofactor>
        <name>FAD</name>
        <dbReference type="ChEBI" id="CHEBI:57692"/>
    </cofactor>
    <text>Binds 1 FAD per subunit.</text>
</comment>
<comment type="subunit">
    <text>Homodimer.</text>
</comment>
<comment type="subcellular location">
    <subcellularLocation>
        <location>Cytoplasm</location>
    </subcellularLocation>
</comment>
<comment type="miscellaneous">
    <text>The active site is a redox-active disulfide bond.</text>
</comment>
<comment type="similarity">
    <text evidence="3">Belongs to the class-I pyridine nucleotide-disulfide oxidoreductase family.</text>
</comment>
<feature type="chain" id="PRO_0000067992" description="Trypanothione reductase">
    <location>
        <begin position="1"/>
        <end position="492"/>
    </location>
</feature>
<feature type="active site" description="Proton acceptor" evidence="1">
    <location>
        <position position="461"/>
    </location>
</feature>
<feature type="binding site">
    <location>
        <begin position="36"/>
        <end position="52"/>
    </location>
    <ligand>
        <name>FAD</name>
        <dbReference type="ChEBI" id="CHEBI:57692"/>
    </ligand>
</feature>
<feature type="disulfide bond" description="Redox-active" evidence="2">
    <location>
        <begin position="53"/>
        <end position="58"/>
    </location>
</feature>
<feature type="sequence variant" description="In strain: Silvio.">
    <original>K</original>
    <variation>N</variation>
    <location>
        <position position="95"/>
    </location>
</feature>
<feature type="sequence variant" description="In strain: Silvio.">
    <original>E</original>
    <variation>A</variation>
    <location>
        <position position="140"/>
    </location>
</feature>
<feature type="sequence variant" description="In strain: Silvio.">
    <original>N</original>
    <variation>H</variation>
    <location>
        <position position="156"/>
    </location>
</feature>
<feature type="sequence variant" description="In strain: Silvio.">
    <original>N</original>
    <variation>T</variation>
    <location>
        <position position="353"/>
    </location>
</feature>
<feature type="sequence variant" description="In strain: Silvio.">
    <original>NI</original>
    <variation>KV</variation>
    <location>
        <begin position="402"/>
        <end position="403"/>
    </location>
</feature>
<feature type="sequence variant" description="In strain: Silvio.">
    <original>V</original>
    <variation>I</variation>
    <location>
        <position position="441"/>
    </location>
</feature>
<feature type="strand" evidence="4">
    <location>
        <begin position="5"/>
        <end position="11"/>
    </location>
</feature>
<feature type="helix" evidence="4">
    <location>
        <begin position="15"/>
        <end position="26"/>
    </location>
</feature>
<feature type="strand" evidence="4">
    <location>
        <begin position="32"/>
        <end position="37"/>
    </location>
</feature>
<feature type="strand" evidence="4">
    <location>
        <begin position="39"/>
        <end position="42"/>
    </location>
</feature>
<feature type="turn" evidence="4">
    <location>
        <begin position="43"/>
        <end position="45"/>
    </location>
</feature>
<feature type="helix" evidence="4">
    <location>
        <begin position="51"/>
        <end position="56"/>
    </location>
</feature>
<feature type="helix" evidence="4">
    <location>
        <begin position="58"/>
        <end position="76"/>
    </location>
</feature>
<feature type="helix" evidence="4">
    <location>
        <begin position="77"/>
        <end position="80"/>
    </location>
</feature>
<feature type="helix" evidence="4">
    <location>
        <begin position="86"/>
        <end position="88"/>
    </location>
</feature>
<feature type="helix" evidence="4">
    <location>
        <begin position="93"/>
        <end position="117"/>
    </location>
</feature>
<feature type="strand" evidence="4">
    <location>
        <begin position="121"/>
        <end position="132"/>
    </location>
</feature>
<feature type="strand" evidence="4">
    <location>
        <begin position="135"/>
        <end position="143"/>
    </location>
</feature>
<feature type="strand" evidence="4">
    <location>
        <begin position="148"/>
        <end position="155"/>
    </location>
</feature>
<feature type="strand" evidence="4">
    <location>
        <begin position="157"/>
        <end position="159"/>
    </location>
</feature>
<feature type="strand" evidence="4">
    <location>
        <begin position="163"/>
        <end position="165"/>
    </location>
</feature>
<feature type="helix" evidence="4">
    <location>
        <begin position="173"/>
        <end position="175"/>
    </location>
</feature>
<feature type="helix" evidence="4">
    <location>
        <begin position="179"/>
        <end position="182"/>
    </location>
</feature>
<feature type="strand" evidence="4">
    <location>
        <begin position="190"/>
        <end position="195"/>
    </location>
</feature>
<feature type="helix" evidence="4">
    <location>
        <begin position="199"/>
        <end position="211"/>
    </location>
</feature>
<feature type="strand" evidence="4">
    <location>
        <begin position="217"/>
        <end position="228"/>
    </location>
</feature>
<feature type="helix" evidence="4">
    <location>
        <begin position="233"/>
        <end position="245"/>
    </location>
</feature>
<feature type="strand" evidence="4">
    <location>
        <begin position="249"/>
        <end position="253"/>
    </location>
</feature>
<feature type="strand" evidence="4">
    <location>
        <begin position="256"/>
        <end position="261"/>
    </location>
</feature>
<feature type="strand" evidence="4">
    <location>
        <begin position="267"/>
        <end position="271"/>
    </location>
</feature>
<feature type="strand" evidence="4">
    <location>
        <begin position="276"/>
        <end position="284"/>
    </location>
</feature>
<feature type="strand" evidence="4">
    <location>
        <begin position="288"/>
        <end position="290"/>
    </location>
</feature>
<feature type="helix" evidence="4">
    <location>
        <begin position="293"/>
        <end position="295"/>
    </location>
</feature>
<feature type="helix" evidence="4">
    <location>
        <begin position="297"/>
        <end position="299"/>
    </location>
</feature>
<feature type="strand" evidence="5">
    <location>
        <begin position="306"/>
        <end position="309"/>
    </location>
</feature>
<feature type="strand" evidence="4">
    <location>
        <begin position="322"/>
        <end position="324"/>
    </location>
</feature>
<feature type="helix" evidence="4">
    <location>
        <begin position="326"/>
        <end position="329"/>
    </location>
</feature>
<feature type="helix" evidence="4">
    <location>
        <begin position="335"/>
        <end position="350"/>
    </location>
</feature>
<feature type="strand" evidence="4">
    <location>
        <begin position="351"/>
        <end position="353"/>
    </location>
</feature>
<feature type="strand" evidence="4">
    <location>
        <begin position="364"/>
        <end position="366"/>
    </location>
</feature>
<feature type="strand" evidence="4">
    <location>
        <begin position="372"/>
        <end position="376"/>
    </location>
</feature>
<feature type="helix" evidence="4">
    <location>
        <begin position="379"/>
        <end position="385"/>
    </location>
</feature>
<feature type="strand" evidence="4">
    <location>
        <begin position="387"/>
        <end position="396"/>
    </location>
</feature>
<feature type="helix" evidence="4">
    <location>
        <begin position="399"/>
        <end position="404"/>
    </location>
</feature>
<feature type="strand" evidence="4">
    <location>
        <begin position="411"/>
        <end position="418"/>
    </location>
</feature>
<feature type="turn" evidence="4">
    <location>
        <begin position="419"/>
        <end position="421"/>
    </location>
</feature>
<feature type="strand" evidence="4">
    <location>
        <begin position="423"/>
        <end position="431"/>
    </location>
</feature>
<feature type="helix" evidence="4">
    <location>
        <begin position="434"/>
        <end position="446"/>
    </location>
</feature>
<feature type="helix" evidence="4">
    <location>
        <begin position="451"/>
        <end position="455"/>
    </location>
</feature>
<feature type="helix" evidence="4">
    <location>
        <begin position="465"/>
        <end position="469"/>
    </location>
</feature>
<feature type="strand" evidence="4">
    <location>
        <begin position="475"/>
        <end position="479"/>
    </location>
</feature>
<feature type="strand" evidence="4">
    <location>
        <begin position="482"/>
        <end position="484"/>
    </location>
</feature>
<evidence type="ECO:0000250" key="1"/>
<evidence type="ECO:0000269" key="2">
    <source>
    </source>
</evidence>
<evidence type="ECO:0000305" key="3"/>
<evidence type="ECO:0007829" key="4">
    <source>
        <dbReference type="PDB" id="1AOG"/>
    </source>
</evidence>
<evidence type="ECO:0007829" key="5">
    <source>
        <dbReference type="PDB" id="1BZL"/>
    </source>
</evidence>
<accession>P28593</accession>
<name>TYTR_TRYCR</name>
<dbReference type="EC" id="1.8.1.12"/>
<dbReference type="EMBL" id="M38051">
    <property type="protein sequence ID" value="AAA63547.1"/>
    <property type="molecule type" value="Genomic_DNA"/>
</dbReference>
<dbReference type="EMBL" id="Z13958">
    <property type="protein sequence ID" value="CAA78360.1"/>
    <property type="molecule type" value="Genomic_DNA"/>
</dbReference>
<dbReference type="PIR" id="S68968">
    <property type="entry name" value="S68968"/>
</dbReference>
<dbReference type="PDB" id="1AOG">
    <property type="method" value="X-ray"/>
    <property type="resolution" value="2.30 A"/>
    <property type="chains" value="A/B=3-487"/>
</dbReference>
<dbReference type="PDB" id="1BZL">
    <property type="method" value="X-ray"/>
    <property type="resolution" value="2.40 A"/>
    <property type="chains" value="A/B=2-487"/>
</dbReference>
<dbReference type="PDB" id="1GXF">
    <property type="method" value="X-ray"/>
    <property type="resolution" value="2.70 A"/>
    <property type="chains" value="A/B=1-492"/>
</dbReference>
<dbReference type="PDB" id="1NDA">
    <property type="method" value="X-ray"/>
    <property type="resolution" value="3.30 A"/>
    <property type="chains" value="A/B/C/D=2-492"/>
</dbReference>
<dbReference type="PDBsum" id="1AOG"/>
<dbReference type="PDBsum" id="1BZL"/>
<dbReference type="PDBsum" id="1GXF"/>
<dbReference type="PDBsum" id="1NDA"/>
<dbReference type="SMR" id="P28593"/>
<dbReference type="BindingDB" id="P28593"/>
<dbReference type="ChEMBL" id="CHEMBL5131"/>
<dbReference type="DrugBank" id="DB03147">
    <property type="generic name" value="Flavin adenine dinucleotide"/>
</dbReference>
<dbReference type="DrugBank" id="DB04299">
    <property type="generic name" value="Maleic acid"/>
</dbReference>
<dbReference type="DrugBank" id="DB02240">
    <property type="generic name" value="Quinacrine mustard"/>
</dbReference>
<dbReference type="DrugBank" id="DB03470">
    <property type="generic name" value="Trypanothione"/>
</dbReference>
<dbReference type="DrugCentral" id="P28593"/>
<dbReference type="VEuPathDB" id="TriTrypDB:BCY84_10688"/>
<dbReference type="VEuPathDB" id="TriTrypDB:C3747_19g298"/>
<dbReference type="VEuPathDB" id="TriTrypDB:C4B63_14g241"/>
<dbReference type="VEuPathDB" id="TriTrypDB:ECC02_012776"/>
<dbReference type="VEuPathDB" id="TriTrypDB:Tc_MARK_3549"/>
<dbReference type="VEuPathDB" id="TriTrypDB:TcBrA4_0014700"/>
<dbReference type="VEuPathDB" id="TriTrypDB:TcCL_ESM09797"/>
<dbReference type="VEuPathDB" id="TriTrypDB:TcCLB.503555.30"/>
<dbReference type="VEuPathDB" id="TriTrypDB:TcCLB.504507.5"/>
<dbReference type="VEuPathDB" id="TriTrypDB:TCDM_11669"/>
<dbReference type="VEuPathDB" id="TriTrypDB:TcG_08092"/>
<dbReference type="VEuPathDB" id="TriTrypDB:TCSYLVIO_004807"/>
<dbReference type="VEuPathDB" id="TriTrypDB:TcYC6_0175630"/>
<dbReference type="BRENDA" id="1.8.1.12">
    <property type="organism ID" value="6524"/>
</dbReference>
<dbReference type="EvolutionaryTrace" id="P28593"/>
<dbReference type="GO" id="GO:0005829">
    <property type="term" value="C:cytosol"/>
    <property type="evidence" value="ECO:0007669"/>
    <property type="project" value="TreeGrafter"/>
</dbReference>
<dbReference type="GO" id="GO:0005739">
    <property type="term" value="C:mitochondrion"/>
    <property type="evidence" value="ECO:0007669"/>
    <property type="project" value="TreeGrafter"/>
</dbReference>
<dbReference type="GO" id="GO:0050660">
    <property type="term" value="F:flavin adenine dinucleotide binding"/>
    <property type="evidence" value="ECO:0007669"/>
    <property type="project" value="InterPro"/>
</dbReference>
<dbReference type="GO" id="GO:0004362">
    <property type="term" value="F:glutathione-disulfide reductase (NADPH) activity"/>
    <property type="evidence" value="ECO:0007669"/>
    <property type="project" value="TreeGrafter"/>
</dbReference>
<dbReference type="GO" id="GO:0015042">
    <property type="term" value="F:trypanothione-disulfide reductase (NADPH) activity"/>
    <property type="evidence" value="ECO:0007669"/>
    <property type="project" value="UniProtKB-EC"/>
</dbReference>
<dbReference type="GO" id="GO:0045454">
    <property type="term" value="P:cell redox homeostasis"/>
    <property type="evidence" value="ECO:0007669"/>
    <property type="project" value="InterPro"/>
</dbReference>
<dbReference type="GO" id="GO:0034599">
    <property type="term" value="P:cellular response to oxidative stress"/>
    <property type="evidence" value="ECO:0007669"/>
    <property type="project" value="TreeGrafter"/>
</dbReference>
<dbReference type="GO" id="GO:0006749">
    <property type="term" value="P:glutathione metabolic process"/>
    <property type="evidence" value="ECO:0007669"/>
    <property type="project" value="TreeGrafter"/>
</dbReference>
<dbReference type="FunFam" id="3.50.50.60:FF:000051">
    <property type="entry name" value="Glutathione reductase"/>
    <property type="match status" value="1"/>
</dbReference>
<dbReference type="FunFam" id="3.50.50.60:FF:000233">
    <property type="entry name" value="Trypanothione reductase"/>
    <property type="match status" value="1"/>
</dbReference>
<dbReference type="Gene3D" id="3.30.390.30">
    <property type="match status" value="1"/>
</dbReference>
<dbReference type="Gene3D" id="3.50.50.60">
    <property type="entry name" value="FAD/NAD(P)-binding domain"/>
    <property type="match status" value="2"/>
</dbReference>
<dbReference type="InterPro" id="IPR036188">
    <property type="entry name" value="FAD/NAD-bd_sf"/>
</dbReference>
<dbReference type="InterPro" id="IPR023753">
    <property type="entry name" value="FAD/NAD-binding_dom"/>
</dbReference>
<dbReference type="InterPro" id="IPR016156">
    <property type="entry name" value="FAD/NAD-linked_Rdtase_dimer_sf"/>
</dbReference>
<dbReference type="InterPro" id="IPR046952">
    <property type="entry name" value="GSHR/TRXR-like"/>
</dbReference>
<dbReference type="InterPro" id="IPR001100">
    <property type="entry name" value="Pyr_nuc-diS_OxRdtase"/>
</dbReference>
<dbReference type="InterPro" id="IPR004099">
    <property type="entry name" value="Pyr_nucl-diS_OxRdtase_dimer"/>
</dbReference>
<dbReference type="InterPro" id="IPR012999">
    <property type="entry name" value="Pyr_OxRdtase_I_AS"/>
</dbReference>
<dbReference type="InterPro" id="IPR001864">
    <property type="entry name" value="Trypnth_redctse"/>
</dbReference>
<dbReference type="NCBIfam" id="TIGR01423">
    <property type="entry name" value="trypano_reduc"/>
    <property type="match status" value="1"/>
</dbReference>
<dbReference type="PANTHER" id="PTHR42737">
    <property type="entry name" value="GLUTATHIONE REDUCTASE"/>
    <property type="match status" value="1"/>
</dbReference>
<dbReference type="PANTHER" id="PTHR42737:SF2">
    <property type="entry name" value="GLUTATHIONE REDUCTASE"/>
    <property type="match status" value="1"/>
</dbReference>
<dbReference type="Pfam" id="PF07992">
    <property type="entry name" value="Pyr_redox_2"/>
    <property type="match status" value="1"/>
</dbReference>
<dbReference type="Pfam" id="PF02852">
    <property type="entry name" value="Pyr_redox_dim"/>
    <property type="match status" value="1"/>
</dbReference>
<dbReference type="PIRSF" id="PIRSF000350">
    <property type="entry name" value="Mercury_reductase_MerA"/>
    <property type="match status" value="1"/>
</dbReference>
<dbReference type="PRINTS" id="PR00368">
    <property type="entry name" value="FADPNR"/>
</dbReference>
<dbReference type="PRINTS" id="PR00411">
    <property type="entry name" value="PNDRDTASEI"/>
</dbReference>
<dbReference type="PRINTS" id="PR00470">
    <property type="entry name" value="TRYPANRDTASE"/>
</dbReference>
<dbReference type="SUPFAM" id="SSF51905">
    <property type="entry name" value="FAD/NAD(P)-binding domain"/>
    <property type="match status" value="1"/>
</dbReference>
<dbReference type="SUPFAM" id="SSF55424">
    <property type="entry name" value="FAD/NAD-linked reductases, dimerisation (C-terminal) domain"/>
    <property type="match status" value="1"/>
</dbReference>
<dbReference type="SUPFAM" id="SSF51971">
    <property type="entry name" value="Nucleotide-binding domain"/>
    <property type="match status" value="1"/>
</dbReference>
<dbReference type="PROSITE" id="PS00076">
    <property type="entry name" value="PYRIDINE_REDOX_1"/>
    <property type="match status" value="1"/>
</dbReference>
<protein>
    <recommendedName>
        <fullName>Trypanothione reductase</fullName>
        <shortName>TR</shortName>
        <ecNumber>1.8.1.12</ecNumber>
    </recommendedName>
    <alternativeName>
        <fullName>N(1),N(8)-bis(glutathionyl)spermidine reductase</fullName>
    </alternativeName>
</protein>
<proteinExistence type="evidence at protein level"/>
<sequence length="492" mass="53868">MMSKIFDLVVIGAGSGGLEAAWNAATLYKKRVAVIDVQMVHGPPFFSALGGTCVNVGCVPKKLMVTGAQYMEHLRESAGFGWEFDRTTLRAEWKKLIAVKDEAVLNINKSYEEMFRDTEGLEFFLGWGSLESKNVVNVRESADPASAVKERLETENILLASGSWPHMPNIPGIEHCISSNEAFYLPEPPRRVLTVGGGFISVEFAGIFNAYKPKDGQVTLCYRGEMILRGFDHTLREELTKQLTANGIQILTKENPAKVELNADGSKSVTFESGKKMDFDLVMMAIGRSPRTKDLQLQNAGVMIKNGGVQVDEYSRTNVSNIYAIGDVTNRVMLTPVAINEAAALVDTVFGTNPRKTDHTRVASAVFSIPPIGTCGLIEEVASKRYEVVAVYLSSFTPLMHNISGSKYKTFVAKIITNHSDGTVLGVHLLGDNAPEIIQGVGICLKLNAKISDFYNTIGVHPTSAEELCSMRTPSYYYVKGEKMEKPSEASL</sequence>
<organism>
    <name type="scientific">Trypanosoma cruzi</name>
    <dbReference type="NCBI Taxonomy" id="5693"/>
    <lineage>
        <taxon>Eukaryota</taxon>
        <taxon>Discoba</taxon>
        <taxon>Euglenozoa</taxon>
        <taxon>Kinetoplastea</taxon>
        <taxon>Metakinetoplastina</taxon>
        <taxon>Trypanosomatida</taxon>
        <taxon>Trypanosomatidae</taxon>
        <taxon>Trypanosoma</taxon>
        <taxon>Schizotrypanum</taxon>
    </lineage>
</organism>
<keyword id="KW-0002">3D-structure</keyword>
<keyword id="KW-0963">Cytoplasm</keyword>
<keyword id="KW-1015">Disulfide bond</keyword>
<keyword id="KW-0274">FAD</keyword>
<keyword id="KW-0285">Flavoprotein</keyword>
<keyword id="KW-0521">NADP</keyword>
<keyword id="KW-0560">Oxidoreductase</keyword>
<keyword id="KW-0676">Redox-active center</keyword>
<reference key="1">
    <citation type="journal article" date="1991" name="Mol. Biochem. Parasitol.">
        <title>Cloning, sequencing, overproduction and purification of trypanothione reductase from Trypanosoma cruzi.</title>
        <authorList>
            <person name="Sullivan F.X."/>
            <person name="Walsh C.T."/>
        </authorList>
    </citation>
    <scope>NUCLEOTIDE SEQUENCE [GENOMIC DNA]</scope>
</reference>
<reference key="2">
    <citation type="journal article" date="1995" name="Eur. J. Biochem.">
        <title>Site-directed mutagenesis of the redox-active cysteines of Trypanosoma cruzi trypanothione reductase.</title>
        <authorList>
            <person name="Borges A."/>
            <person name="Cunningham M.L."/>
            <person name="Tover J."/>
            <person name="Fairlamb A.H."/>
        </authorList>
    </citation>
    <scope>NUCLEOTIDE SEQUENCE [GENOMIC DNA]</scope>
    <source>
        <strain>Silvio</strain>
    </source>
</reference>
<reference key="3">
    <citation type="journal article" date="1993" name="FEBS Lett.">
        <title>Crystallization and preliminary crystallographic analysis of trypanothione reductase from Trypanosoma cruzi, the causative agent of Chagas' disease.</title>
        <authorList>
            <person name="Krauth-Siegel R.L."/>
            <person name="Sticherling C."/>
            <person name="Jost I."/>
            <person name="Walsh C.T."/>
            <person name="Pai E.F."/>
            <person name="Kabsch W."/>
            <person name="Lantwin C.B."/>
        </authorList>
    </citation>
    <scope>X-RAY CRYSTALLOGRAPHY (3.3 ANGSTROMS) OF 2-492</scope>
    <scope>DISULFIDE BOND</scope>
</reference>
<reference key="4">
    <citation type="journal article" date="1994" name="Proteins">
        <title>The structure of Trypanosoma cruzi trypanothione reductase in the oxidized and NADPH reduced state.</title>
        <authorList>
            <person name="Lantwin C.B."/>
            <person name="Schlichting I."/>
            <person name="Kabsch W."/>
            <person name="Pai E.F."/>
            <person name="Krauth-Siegel R.L."/>
        </authorList>
    </citation>
    <scope>X-RAY CRYSTALLOGRAPHY (3.3 ANGSTROMS)</scope>
</reference>
<reference key="5">
    <citation type="journal article" date="1996" name="Protein Sci.">
        <title>The crystal structure of trypanothione reductase from the human pathogen Trypanosoma cruzi at 2.3-A resolution.</title>
        <authorList>
            <person name="Zhang Y."/>
            <person name="Bond C.S."/>
            <person name="Bailey S."/>
            <person name="Cunningham M.L."/>
            <person name="Fairlamb A.H."/>
            <person name="Hunter W.N."/>
        </authorList>
    </citation>
    <scope>X-RAY CRYSTALLOGRAPHY (2.3 ANGSTROMS)</scope>
    <source>
        <strain>Silvio</strain>
    </source>
</reference>